<reference key="1">
    <citation type="journal article" date="1988" name="Plant Mol. Biol.">
        <title>Four genes in two diverged subfamilies encode the ribulose-1,5-bisphosphate carboxylase small subunit polypeptides of Arabidopsis thaliana.</title>
        <authorList>
            <person name="Krebbers E."/>
            <person name="Seurinck J."/>
            <person name="Herdies L."/>
            <person name="Cashmore A.R."/>
            <person name="Timko M.P."/>
        </authorList>
        <dbReference type="AGRICOLA" id="IND91035191"/>
    </citation>
    <scope>NUCLEOTIDE SEQUENCE [GENOMIC DNA]</scope>
    <source>
        <strain>cv. Columbia K85</strain>
    </source>
</reference>
<reference key="2">
    <citation type="journal article" date="1997" name="DNA Res.">
        <title>Structural analysis of Arabidopsis thaliana chromosome 5. I. Sequence features of the 1.6 Mb regions covered by twenty physically assigned P1 clones.</title>
        <authorList>
            <person name="Sato S."/>
            <person name="Kotani H."/>
            <person name="Nakamura Y."/>
            <person name="Kaneko T."/>
            <person name="Asamizu E."/>
            <person name="Fukami M."/>
            <person name="Miyajima N."/>
            <person name="Tabata S."/>
        </authorList>
    </citation>
    <scope>NUCLEOTIDE SEQUENCE [LARGE SCALE GENOMIC DNA]</scope>
    <source>
        <strain>cv. Columbia</strain>
    </source>
</reference>
<reference key="3">
    <citation type="journal article" date="2017" name="Plant J.">
        <title>Araport11: a complete reannotation of the Arabidopsis thaliana reference genome.</title>
        <authorList>
            <person name="Cheng C.Y."/>
            <person name="Krishnakumar V."/>
            <person name="Chan A.P."/>
            <person name="Thibaud-Nissen F."/>
            <person name="Schobel S."/>
            <person name="Town C.D."/>
        </authorList>
    </citation>
    <scope>GENOME REANNOTATION</scope>
    <source>
        <strain>cv. Columbia</strain>
    </source>
</reference>
<reference key="4">
    <citation type="journal article" date="2003" name="Science">
        <title>Empirical analysis of transcriptional activity in the Arabidopsis genome.</title>
        <authorList>
            <person name="Yamada K."/>
            <person name="Lim J."/>
            <person name="Dale J.M."/>
            <person name="Chen H."/>
            <person name="Shinn P."/>
            <person name="Palm C.J."/>
            <person name="Southwick A.M."/>
            <person name="Wu H.C."/>
            <person name="Kim C.J."/>
            <person name="Nguyen M."/>
            <person name="Pham P.K."/>
            <person name="Cheuk R.F."/>
            <person name="Karlin-Newmann G."/>
            <person name="Liu S.X."/>
            <person name="Lam B."/>
            <person name="Sakano H."/>
            <person name="Wu T."/>
            <person name="Yu G."/>
            <person name="Miranda M."/>
            <person name="Quach H.L."/>
            <person name="Tripp M."/>
            <person name="Chang C.H."/>
            <person name="Lee J.M."/>
            <person name="Toriumi M.J."/>
            <person name="Chan M.M."/>
            <person name="Tang C.C."/>
            <person name="Onodera C.S."/>
            <person name="Deng J.M."/>
            <person name="Akiyama K."/>
            <person name="Ansari Y."/>
            <person name="Arakawa T."/>
            <person name="Banh J."/>
            <person name="Banno F."/>
            <person name="Bowser L."/>
            <person name="Brooks S.Y."/>
            <person name="Carninci P."/>
            <person name="Chao Q."/>
            <person name="Choy N."/>
            <person name="Enju A."/>
            <person name="Goldsmith A.D."/>
            <person name="Gurjal M."/>
            <person name="Hansen N.F."/>
            <person name="Hayashizaki Y."/>
            <person name="Johnson-Hopson C."/>
            <person name="Hsuan V.W."/>
            <person name="Iida K."/>
            <person name="Karnes M."/>
            <person name="Khan S."/>
            <person name="Koesema E."/>
            <person name="Ishida J."/>
            <person name="Jiang P.X."/>
            <person name="Jones T."/>
            <person name="Kawai J."/>
            <person name="Kamiya A."/>
            <person name="Meyers C."/>
            <person name="Nakajima M."/>
            <person name="Narusaka M."/>
            <person name="Seki M."/>
            <person name="Sakurai T."/>
            <person name="Satou M."/>
            <person name="Tamse R."/>
            <person name="Vaysberg M."/>
            <person name="Wallender E.K."/>
            <person name="Wong C."/>
            <person name="Yamamura Y."/>
            <person name="Yuan S."/>
            <person name="Shinozaki K."/>
            <person name="Davis R.W."/>
            <person name="Theologis A."/>
            <person name="Ecker J.R."/>
        </authorList>
    </citation>
    <scope>NUCLEOTIDE SEQUENCE [LARGE SCALE MRNA]</scope>
    <source>
        <strain>cv. Columbia</strain>
    </source>
</reference>
<reference key="5">
    <citation type="journal article" date="1993" name="Plant J.">
        <title>An inventory of 1152 expressed sequence tags obtained by partial sequencing of cDNAs from Arabidopsis thaliana.</title>
        <authorList>
            <person name="Hoefte H."/>
            <person name="Desprez T."/>
            <person name="Amselem J."/>
            <person name="Chiapello H."/>
            <person name="Rouze P."/>
            <person name="Caboche M."/>
            <person name="Moisan A."/>
            <person name="Jourjon M.-F."/>
            <person name="Charpenteau J.-L."/>
            <person name="Berthomieu P."/>
            <person name="Guerrier D."/>
            <person name="Giraudat J."/>
            <person name="Quigley F."/>
            <person name="Thomas F."/>
            <person name="Yu D.-Y."/>
            <person name="Mache R."/>
            <person name="Raynal M."/>
            <person name="Cooke R."/>
            <person name="Grellet F."/>
            <person name="Delseny M."/>
            <person name="Parmentier Y."/>
            <person name="de Marcillac G."/>
            <person name="Gigot C."/>
            <person name="Fleck J."/>
            <person name="Philipps G."/>
            <person name="Axelos M."/>
            <person name="Bardet C."/>
            <person name="Tremousaygue D."/>
            <person name="Lescure B."/>
        </authorList>
    </citation>
    <scope>NUCLEOTIDE SEQUENCE [LARGE SCALE MRNA] OF 56-100</scope>
    <source>
        <strain>cv. C24</strain>
        <tissue>Flower bud</tissue>
    </source>
</reference>
<proteinExistence type="evidence at transcript level"/>
<comment type="function">
    <text evidence="1">RuBisCO catalyzes two reactions: the carboxylation of D-ribulose 1,5-bisphosphate, the primary event in carbon dioxide fixation, as well as the oxidative fragmentation of the pentose substrate. Both reactions occur simultaneously and in competition at the same active site. Although the small subunit is not catalytic it is essential for maximal activity.</text>
</comment>
<comment type="subunit">
    <text evidence="1">Heterohexadecamer of 8 large and 8 small subunits.</text>
</comment>
<comment type="subcellular location">
    <subcellularLocation>
        <location evidence="1">Plastid</location>
        <location evidence="1">Chloroplast</location>
    </subcellularLocation>
</comment>
<comment type="miscellaneous">
    <text>There are four genes coding for RBS in Arabidopsis thaliana.</text>
</comment>
<comment type="miscellaneous">
    <text evidence="1">The basic functional RuBisCO is composed of a large chain homodimer in a 'head-to-tail' conformation. In form I RuBisCO this homodimer is arranged in a barrel-like tetramer with the small subunits forming a tetrameric 'cap' on each end of the 'barrel'.</text>
</comment>
<comment type="similarity">
    <text evidence="1">Belongs to the RuBisCO small chain family.</text>
</comment>
<evidence type="ECO:0000255" key="1">
    <source>
        <dbReference type="HAMAP-Rule" id="MF_00860"/>
    </source>
</evidence>
<evidence type="ECO:0000305" key="2"/>
<keyword id="KW-0113">Calvin cycle</keyword>
<keyword id="KW-0120">Carbon dioxide fixation</keyword>
<keyword id="KW-0150">Chloroplast</keyword>
<keyword id="KW-0601">Photorespiration</keyword>
<keyword id="KW-0602">Photosynthesis</keyword>
<keyword id="KW-0934">Plastid</keyword>
<keyword id="KW-1185">Reference proteome</keyword>
<keyword id="KW-0809">Transit peptide</keyword>
<organism>
    <name type="scientific">Arabidopsis thaliana</name>
    <name type="common">Mouse-ear cress</name>
    <dbReference type="NCBI Taxonomy" id="3702"/>
    <lineage>
        <taxon>Eukaryota</taxon>
        <taxon>Viridiplantae</taxon>
        <taxon>Streptophyta</taxon>
        <taxon>Embryophyta</taxon>
        <taxon>Tracheophyta</taxon>
        <taxon>Spermatophyta</taxon>
        <taxon>Magnoliopsida</taxon>
        <taxon>eudicotyledons</taxon>
        <taxon>Gunneridae</taxon>
        <taxon>Pentapetalae</taxon>
        <taxon>rosids</taxon>
        <taxon>malvids</taxon>
        <taxon>Brassicales</taxon>
        <taxon>Brassicaceae</taxon>
        <taxon>Camelineae</taxon>
        <taxon>Arabidopsis</taxon>
    </lineage>
</organism>
<accession>P10797</accession>
<accession>Q9FF20</accession>
<sequence>MASSMFSSTAVVTSPAQATMVAPFTGLKSSASFPVTRKANNDITSITSNGGRVSCMKVWPPIGKKKFETLSYLPDLSDVELAKEVDYLLRNKWIPCVEFELEHGFVYREHGNTPGYYDGRYWTMWKLPLFGCTDSAQVLKEVEECKKEYPGAFIRIIGFDNTRQVQCISFIAYKPPSFTEA</sequence>
<name>RBS2B_ARATH</name>
<feature type="transit peptide" description="Chloroplast" evidence="1">
    <location>
        <begin position="1"/>
        <end position="54"/>
    </location>
</feature>
<feature type="chain" id="PRO_0000031465" description="Ribulose bisphosphate carboxylase small subunit 2B, chloroplastic" evidence="1">
    <location>
        <begin position="55"/>
        <end position="181"/>
    </location>
</feature>
<feature type="sequence conflict" description="In Ref. 1; CAA32701." evidence="2" ref="1">
    <original>F</original>
    <variation>L</variation>
    <location>
        <position position="6"/>
    </location>
</feature>
<protein>
    <recommendedName>
        <fullName>Ribulose bisphosphate carboxylase small subunit 2B, chloroplastic</fullName>
        <shortName>RuBisCO small subunit 2B</shortName>
    </recommendedName>
</protein>
<dbReference type="EMBL" id="X14564">
    <property type="protein sequence ID" value="CAA32701.1"/>
    <property type="molecule type" value="Genomic_DNA"/>
</dbReference>
<dbReference type="EMBL" id="AB005248">
    <property type="protein sequence ID" value="BAB09354.1"/>
    <property type="molecule type" value="Genomic_DNA"/>
</dbReference>
<dbReference type="EMBL" id="CP002688">
    <property type="protein sequence ID" value="AED94314.1"/>
    <property type="molecule type" value="Genomic_DNA"/>
</dbReference>
<dbReference type="EMBL" id="AY059939">
    <property type="protein sequence ID" value="AAL24421.1"/>
    <property type="molecule type" value="mRNA"/>
</dbReference>
<dbReference type="EMBL" id="AY062437">
    <property type="protein sequence ID" value="AAL32515.1"/>
    <property type="molecule type" value="mRNA"/>
</dbReference>
<dbReference type="EMBL" id="AY062458">
    <property type="protein sequence ID" value="AAL32536.1"/>
    <property type="molecule type" value="mRNA"/>
</dbReference>
<dbReference type="EMBL" id="AY062543">
    <property type="protein sequence ID" value="AAL32621.1"/>
    <property type="molecule type" value="mRNA"/>
</dbReference>
<dbReference type="EMBL" id="AY093288">
    <property type="protein sequence ID" value="AAM13287.1"/>
    <property type="molecule type" value="mRNA"/>
</dbReference>
<dbReference type="EMBL" id="BT002094">
    <property type="protein sequence ID" value="AAN72105.1"/>
    <property type="molecule type" value="mRNA"/>
</dbReference>
<dbReference type="EMBL" id="BT002554">
    <property type="protein sequence ID" value="AAO00914.1"/>
    <property type="molecule type" value="mRNA"/>
</dbReference>
<dbReference type="EMBL" id="BT003356">
    <property type="protein sequence ID" value="AAO29974.1"/>
    <property type="molecule type" value="mRNA"/>
</dbReference>
<dbReference type="EMBL" id="Z18199">
    <property type="protein sequence ID" value="CAA79132.1"/>
    <property type="molecule type" value="mRNA"/>
</dbReference>
<dbReference type="PIR" id="S03718">
    <property type="entry name" value="RKMUB2"/>
</dbReference>
<dbReference type="RefSeq" id="NP_198658.1">
    <property type="nucleotide sequence ID" value="NM_123203.5"/>
</dbReference>
<dbReference type="SMR" id="P10797"/>
<dbReference type="BioGRID" id="19080">
    <property type="interactions" value="30"/>
</dbReference>
<dbReference type="FunCoup" id="P10797">
    <property type="interactions" value="527"/>
</dbReference>
<dbReference type="IntAct" id="P10797">
    <property type="interactions" value="23"/>
</dbReference>
<dbReference type="STRING" id="3702.P10797"/>
<dbReference type="iPTMnet" id="P10797"/>
<dbReference type="PaxDb" id="3702-AT5G38420.1"/>
<dbReference type="EnsemblPlants" id="AT5G38420.1">
    <property type="protein sequence ID" value="AT5G38420.1"/>
    <property type="gene ID" value="AT5G38420"/>
</dbReference>
<dbReference type="GeneID" id="833829"/>
<dbReference type="Gramene" id="AT5G38420.1">
    <property type="protein sequence ID" value="AT5G38420.1"/>
    <property type="gene ID" value="AT5G38420"/>
</dbReference>
<dbReference type="KEGG" id="ath:AT5G38420"/>
<dbReference type="Araport" id="AT5G38420"/>
<dbReference type="TAIR" id="AT5G38420">
    <property type="gene designation" value="RBCS2B"/>
</dbReference>
<dbReference type="eggNOG" id="ENOG502QT0M">
    <property type="taxonomic scope" value="Eukaryota"/>
</dbReference>
<dbReference type="HOGENOM" id="CLU_098114_1_0_1"/>
<dbReference type="InParanoid" id="P10797"/>
<dbReference type="OMA" id="EAWIRII"/>
<dbReference type="PhylomeDB" id="P10797"/>
<dbReference type="BioCyc" id="MetaCyc:AT5G38420-MONOMER"/>
<dbReference type="PRO" id="PR:P10797"/>
<dbReference type="Proteomes" id="UP000006548">
    <property type="component" value="Chromosome 5"/>
</dbReference>
<dbReference type="ExpressionAtlas" id="P10797">
    <property type="expression patterns" value="baseline and differential"/>
</dbReference>
<dbReference type="GO" id="GO:0048046">
    <property type="term" value="C:apoplast"/>
    <property type="evidence" value="ECO:0007005"/>
    <property type="project" value="TAIR"/>
</dbReference>
<dbReference type="GO" id="GO:0009507">
    <property type="term" value="C:chloroplast"/>
    <property type="evidence" value="ECO:0007005"/>
    <property type="project" value="TAIR"/>
</dbReference>
<dbReference type="GO" id="GO:0009941">
    <property type="term" value="C:chloroplast envelope"/>
    <property type="evidence" value="ECO:0007005"/>
    <property type="project" value="TAIR"/>
</dbReference>
<dbReference type="GO" id="GO:0009570">
    <property type="term" value="C:chloroplast stroma"/>
    <property type="evidence" value="ECO:0007005"/>
    <property type="project" value="TAIR"/>
</dbReference>
<dbReference type="GO" id="GO:0022626">
    <property type="term" value="C:cytosolic ribosome"/>
    <property type="evidence" value="ECO:0007005"/>
    <property type="project" value="TAIR"/>
</dbReference>
<dbReference type="GO" id="GO:0009536">
    <property type="term" value="C:plastid"/>
    <property type="evidence" value="ECO:0007005"/>
    <property type="project" value="TAIR"/>
</dbReference>
<dbReference type="GO" id="GO:0009579">
    <property type="term" value="C:thylakoid"/>
    <property type="evidence" value="ECO:0007005"/>
    <property type="project" value="TAIR"/>
</dbReference>
<dbReference type="GO" id="GO:0003729">
    <property type="term" value="F:mRNA binding"/>
    <property type="evidence" value="ECO:0000314"/>
    <property type="project" value="TAIR"/>
</dbReference>
<dbReference type="GO" id="GO:0019904">
    <property type="term" value="F:protein domain specific binding"/>
    <property type="evidence" value="ECO:0000353"/>
    <property type="project" value="CAFA"/>
</dbReference>
<dbReference type="GO" id="GO:0016984">
    <property type="term" value="F:ribulose-bisphosphate carboxylase activity"/>
    <property type="evidence" value="ECO:0007669"/>
    <property type="project" value="UniProtKB-UniRule"/>
</dbReference>
<dbReference type="GO" id="GO:0009853">
    <property type="term" value="P:photorespiration"/>
    <property type="evidence" value="ECO:0007669"/>
    <property type="project" value="UniProtKB-KW"/>
</dbReference>
<dbReference type="GO" id="GO:0019253">
    <property type="term" value="P:reductive pentose-phosphate cycle"/>
    <property type="evidence" value="ECO:0007669"/>
    <property type="project" value="UniProtKB-UniRule"/>
</dbReference>
<dbReference type="CDD" id="cd03527">
    <property type="entry name" value="RuBisCO_small"/>
    <property type="match status" value="1"/>
</dbReference>
<dbReference type="FunFam" id="3.30.190.10:FF:000001">
    <property type="entry name" value="Ribulose bisphosphate carboxylase small chain, chloroplastic"/>
    <property type="match status" value="1"/>
</dbReference>
<dbReference type="Gene3D" id="3.30.190.10">
    <property type="entry name" value="Ribulose bisphosphate carboxylase, small subunit"/>
    <property type="match status" value="1"/>
</dbReference>
<dbReference type="HAMAP" id="MF_00859">
    <property type="entry name" value="RuBisCO_S_bact"/>
    <property type="match status" value="1"/>
</dbReference>
<dbReference type="InterPro" id="IPR024681">
    <property type="entry name" value="RuBisCO_ssu"/>
</dbReference>
<dbReference type="InterPro" id="IPR000894">
    <property type="entry name" value="RuBisCO_ssu_dom"/>
</dbReference>
<dbReference type="InterPro" id="IPR024680">
    <property type="entry name" value="RuBisCO_ssu_N"/>
</dbReference>
<dbReference type="InterPro" id="IPR036385">
    <property type="entry name" value="RuBisCO_ssu_sf"/>
</dbReference>
<dbReference type="PANTHER" id="PTHR31262">
    <property type="entry name" value="RIBULOSE BISPHOSPHATE CARBOXYLASE SMALL CHAIN 1, CHLOROPLASTIC"/>
    <property type="match status" value="1"/>
</dbReference>
<dbReference type="PANTHER" id="PTHR31262:SF10">
    <property type="entry name" value="RIBULOSE BISPHOSPHATE CARBOXYLASE SMALL SUBUNIT 1A, CHLOROPLASTIC-RELATED"/>
    <property type="match status" value="1"/>
</dbReference>
<dbReference type="Pfam" id="PF12338">
    <property type="entry name" value="RbcS"/>
    <property type="match status" value="1"/>
</dbReference>
<dbReference type="Pfam" id="PF00101">
    <property type="entry name" value="RuBisCO_small"/>
    <property type="match status" value="1"/>
</dbReference>
<dbReference type="PRINTS" id="PR00152">
    <property type="entry name" value="RUBISCOSMALL"/>
</dbReference>
<dbReference type="SMART" id="SM00961">
    <property type="entry name" value="RuBisCO_small"/>
    <property type="match status" value="1"/>
</dbReference>
<dbReference type="SUPFAM" id="SSF55239">
    <property type="entry name" value="RuBisCO, small subunit"/>
    <property type="match status" value="1"/>
</dbReference>
<gene>
    <name type="primary">RBCS-2B</name>
    <name type="synonym">ATS2B</name>
    <name type="ordered locus">At5g38420</name>
    <name type="ORF">MXI10.14</name>
</gene>